<organism>
    <name type="scientific">Xenopus laevis</name>
    <name type="common">African clawed frog</name>
    <dbReference type="NCBI Taxonomy" id="8355"/>
    <lineage>
        <taxon>Eukaryota</taxon>
        <taxon>Metazoa</taxon>
        <taxon>Chordata</taxon>
        <taxon>Craniata</taxon>
        <taxon>Vertebrata</taxon>
        <taxon>Euteleostomi</taxon>
        <taxon>Amphibia</taxon>
        <taxon>Batrachia</taxon>
        <taxon>Anura</taxon>
        <taxon>Pipoidea</taxon>
        <taxon>Pipidae</taxon>
        <taxon>Xenopodinae</taxon>
        <taxon>Xenopus</taxon>
        <taxon>Xenopus</taxon>
    </lineage>
</organism>
<gene>
    <name type="primary">erlin2-b</name>
    <name type="synonym">spfh2-b</name>
</gene>
<evidence type="ECO:0000250" key="1">
    <source>
        <dbReference type="UniProtKB" id="O94905"/>
    </source>
</evidence>
<evidence type="ECO:0000255" key="2"/>
<evidence type="ECO:0000256" key="3">
    <source>
        <dbReference type="SAM" id="MobiDB-lite"/>
    </source>
</evidence>
<evidence type="ECO:0000312" key="4">
    <source>
        <dbReference type="EMBL" id="AAH74372.1"/>
    </source>
</evidence>
<comment type="function">
    <text evidence="1">Mediates the endoplasmic reticulum-associated degradation (ERAD) of inositol 1,4,5-trisphosphate receptors (IP3Rs). Promotes sterol-accelerated ERAD of HMGCR. Involved in regulation of cellular cholesterol homeostasis by regulation the SREBP signaling pathway (By similarity).</text>
</comment>
<comment type="subcellular location">
    <subcellularLocation>
        <location evidence="1 2">Endoplasmic reticulum membrane</location>
        <topology evidence="1 2">Single-pass type II membrane protein</topology>
    </subcellularLocation>
    <text evidence="1 2">Associated with lipid raft-like domains of the endoplasmic reticulum membrane.</text>
</comment>
<comment type="similarity">
    <text evidence="2">Belongs to the band 7/mec-2 family.</text>
</comment>
<protein>
    <recommendedName>
        <fullName>Erlin-2-B</fullName>
    </recommendedName>
    <alternativeName>
        <fullName>Endoplasmic reticulum lipid raft-associated protein 2-B</fullName>
    </alternativeName>
    <alternativeName>
        <fullName>Stomatin-prohibitin-flotillin-HflC/K domain-containing protein 2-B</fullName>
        <shortName>SPFH domain-containing protein 2-B</shortName>
    </alternativeName>
</protein>
<keyword id="KW-0153">Cholesterol metabolism</keyword>
<keyword id="KW-0256">Endoplasmic reticulum</keyword>
<keyword id="KW-0325">Glycoprotein</keyword>
<keyword id="KW-0443">Lipid metabolism</keyword>
<keyword id="KW-0472">Membrane</keyword>
<keyword id="KW-1185">Reference proteome</keyword>
<keyword id="KW-0735">Signal-anchor</keyword>
<keyword id="KW-0753">Steroid metabolism</keyword>
<keyword id="KW-1207">Sterol metabolism</keyword>
<keyword id="KW-0812">Transmembrane</keyword>
<keyword id="KW-1133">Transmembrane helix</keyword>
<accession>Q6DKC0</accession>
<dbReference type="EMBL" id="BC074372">
    <property type="protein sequence ID" value="AAH74372.1"/>
    <property type="molecule type" value="mRNA"/>
</dbReference>
<dbReference type="SMR" id="Q6DKC0"/>
<dbReference type="GlyCosmos" id="Q6DKC0">
    <property type="glycosylation" value="1 site, No reported glycans"/>
</dbReference>
<dbReference type="DNASU" id="444675"/>
<dbReference type="GeneID" id="444675"/>
<dbReference type="KEGG" id="xla:444675"/>
<dbReference type="AGR" id="Xenbase:XB-GENE-6254593"/>
<dbReference type="CTD" id="444675"/>
<dbReference type="Xenbase" id="XB-GENE-6254593">
    <property type="gene designation" value="erlin2.S"/>
</dbReference>
<dbReference type="OMA" id="YNMVRNF"/>
<dbReference type="OrthoDB" id="77368at2759"/>
<dbReference type="Proteomes" id="UP000186698">
    <property type="component" value="Chromosome 3S"/>
</dbReference>
<dbReference type="Bgee" id="444675">
    <property type="expression patterns" value="Expressed in lung and 19 other cell types or tissues"/>
</dbReference>
<dbReference type="GO" id="GO:0005789">
    <property type="term" value="C:endoplasmic reticulum membrane"/>
    <property type="evidence" value="ECO:0000318"/>
    <property type="project" value="GO_Central"/>
</dbReference>
<dbReference type="GO" id="GO:0015485">
    <property type="term" value="F:cholesterol binding"/>
    <property type="evidence" value="ECO:0000318"/>
    <property type="project" value="GO_Central"/>
</dbReference>
<dbReference type="GO" id="GO:0031625">
    <property type="term" value="F:ubiquitin protein ligase binding"/>
    <property type="evidence" value="ECO:0007669"/>
    <property type="project" value="InterPro"/>
</dbReference>
<dbReference type="GO" id="GO:0008203">
    <property type="term" value="P:cholesterol metabolic process"/>
    <property type="evidence" value="ECO:0007669"/>
    <property type="project" value="UniProtKB-KW"/>
</dbReference>
<dbReference type="GO" id="GO:0032933">
    <property type="term" value="P:SREBP signaling pathway"/>
    <property type="evidence" value="ECO:0000318"/>
    <property type="project" value="GO_Central"/>
</dbReference>
<dbReference type="CDD" id="cd03406">
    <property type="entry name" value="SPFH_like_u3"/>
    <property type="match status" value="1"/>
</dbReference>
<dbReference type="FunFam" id="3.30.479.30:FF:000009">
    <property type="entry name" value="Erlin-2 isoform 1"/>
    <property type="match status" value="1"/>
</dbReference>
<dbReference type="Gene3D" id="3.30.479.30">
    <property type="entry name" value="Band 7 domain"/>
    <property type="match status" value="1"/>
</dbReference>
<dbReference type="InterPro" id="IPR001107">
    <property type="entry name" value="Band_7"/>
</dbReference>
<dbReference type="InterPro" id="IPR036013">
    <property type="entry name" value="Band_7/SPFH_dom_sf"/>
</dbReference>
<dbReference type="InterPro" id="IPR033294">
    <property type="entry name" value="Erlin1/2"/>
</dbReference>
<dbReference type="PANTHER" id="PTHR15351">
    <property type="entry name" value="ERLIN (ER LIPID RAFT ASSOCIATED PROTEIN) HOMOLOG"/>
    <property type="match status" value="1"/>
</dbReference>
<dbReference type="PANTHER" id="PTHR15351:SF4">
    <property type="entry name" value="ERLIN-2"/>
    <property type="match status" value="1"/>
</dbReference>
<dbReference type="Pfam" id="PF01145">
    <property type="entry name" value="Band_7"/>
    <property type="match status" value="1"/>
</dbReference>
<dbReference type="SMART" id="SM00244">
    <property type="entry name" value="PHB"/>
    <property type="match status" value="1"/>
</dbReference>
<reference evidence="4" key="1">
    <citation type="submission" date="2004-06" db="EMBL/GenBank/DDBJ databases">
        <authorList>
            <consortium name="NIH - Xenopus Gene Collection (XGC) project"/>
        </authorList>
    </citation>
    <scope>NUCLEOTIDE SEQUENCE [LARGE SCALE MRNA]</scope>
    <source>
        <tissue evidence="4">Brain</tissue>
    </source>
</reference>
<feature type="chain" id="PRO_0000378629" description="Erlin-2-B">
    <location>
        <begin position="1"/>
        <end position="330"/>
    </location>
</feature>
<feature type="topological domain" description="Cytoplasmic" evidence="2">
    <location>
        <begin position="1"/>
        <end position="2"/>
    </location>
</feature>
<feature type="transmembrane region" description="Helical" evidence="2">
    <location>
        <begin position="3"/>
        <end position="23"/>
    </location>
</feature>
<feature type="topological domain" description="Lumenal" evidence="2">
    <location>
        <begin position="24"/>
        <end position="330"/>
    </location>
</feature>
<feature type="region of interest" description="Disordered" evidence="3">
    <location>
        <begin position="308"/>
        <end position="330"/>
    </location>
</feature>
<feature type="compositionally biased region" description="Basic and acidic residues" evidence="3">
    <location>
        <begin position="319"/>
        <end position="330"/>
    </location>
</feature>
<feature type="glycosylation site" description="N-linked (GlcNAc...) asparagine" evidence="2">
    <location>
        <position position="106"/>
    </location>
</feature>
<name>ERL2B_XENLA</name>
<sequence>MSHAGAIAALGVALIAAALFSAIHKIEEGHVGVYYRGGALLTTTSGPGFHLMLPFITSFKSVQSTLQTDEVKNVPCGTSGGVMIYFDRIEVVNYLISSAVYDIVKNYTADYDKALIFNKIHHELNQFCSVHNLQEVYIELFDQIDEDLKLALQKDLNLMAPGIIIQAVRVTKPNIPEAIRRNYELMESEKTKLLIAAQKQKVVEKEAETERKKAIIEAEKVAQVAQIKYGQKVMEKETEKKISEIEDFAFLAREKARADAEYYTAQKAAEANKLKLTPEYLQLMKYQAIAANSKIYFGQDIPNMFMDSSSAGPRVQSAKRNEPAAAEELK</sequence>
<proteinExistence type="evidence at transcript level"/>